<gene>
    <name type="primary">ndd</name>
</gene>
<keyword id="KW-0238">DNA-binding</keyword>
<keyword id="KW-0945">Host-virus interaction</keyword>
<keyword id="KW-1248">Inhibition of host DNA replication by virus</keyword>
<keyword id="KW-1121">Modulation of host cell cycle by virus</keyword>
<name>NDD_BPT2</name>
<dbReference type="RefSeq" id="YP_010073914.1">
    <property type="nucleotide sequence ID" value="NC_054931.1"/>
</dbReference>
<dbReference type="GeneID" id="65062636"/>
<dbReference type="GO" id="GO:0003677">
    <property type="term" value="F:DNA binding"/>
    <property type="evidence" value="ECO:0007669"/>
    <property type="project" value="UniProtKB-KW"/>
</dbReference>
<dbReference type="GO" id="GO:0044071">
    <property type="term" value="P:symbiont-mediated perturbation of host cell cycle progression"/>
    <property type="evidence" value="ECO:0007669"/>
    <property type="project" value="UniProtKB-KW"/>
</dbReference>
<dbReference type="GO" id="GO:0098673">
    <property type="term" value="P:symbiont-mediated suppression of host DNA replication"/>
    <property type="evidence" value="ECO:0007669"/>
    <property type="project" value="UniProtKB-KW"/>
</dbReference>
<dbReference type="InterPro" id="IPR009514">
    <property type="entry name" value="Phage_Ndd"/>
</dbReference>
<dbReference type="Pfam" id="PF06591">
    <property type="entry name" value="Phage_T4_Ndd"/>
    <property type="match status" value="1"/>
</dbReference>
<comment type="function">
    <text evidence="1">Disorganizes the host nucleoid and inhibits replication, but without host DNA cleavage or degradation. Only the architecture of the nucleoid is affected. May act on the host chromosomal sequences that determine the structure of the nucleoid. Binds to dsDNA but not to ssDNA.</text>
</comment>
<protein>
    <recommendedName>
        <fullName>Nucleoid disruption protein</fullName>
    </recommendedName>
    <alternativeName>
        <fullName>Nuclear disruption protein</fullName>
    </alternativeName>
</protein>
<feature type="chain" id="PRO_0000164961" description="Nucleoid disruption protein">
    <location>
        <begin position="1"/>
        <end position="152"/>
    </location>
</feature>
<accession>P69189</accession>
<accession>P42266</accession>
<proteinExistence type="inferred from homology"/>
<reference key="1">
    <citation type="journal article" date="1994" name="Gene">
        <title>Direct PCR sequencing of the ndd gene of bacteriophage T4: identification of a product involved in bacterial nucleoid disruption.</title>
        <authorList>
            <person name="Bouet J.-Y."/>
            <person name="Woszczyk J."/>
            <person name="Repoila F."/>
            <person name="Francois V."/>
            <person name="Louarn J.-M."/>
            <person name="Krisch H.M."/>
        </authorList>
    </citation>
    <scope>NUCLEOTIDE SEQUENCE</scope>
</reference>
<sequence length="152" mass="17147">MKYMTVTDLNNAGATVIGTIKGGEWFLGTPHKDILSKPGFYFLVSKLDGRPFSNPCVSARFYVGNQRSKQGFSAVLSHIRQRRSQLARTIANNNVPYTVFYLPASKMKPLTTGFGKGQLALAFTRNHHSEYQTLEEMNRMLADNFKFVLQAY</sequence>
<organism>
    <name type="scientific">Enterobacteria phage T2</name>
    <name type="common">Bacteriophage T2</name>
    <dbReference type="NCBI Taxonomy" id="2060721"/>
    <lineage>
        <taxon>Viruses</taxon>
        <taxon>Duplodnaviria</taxon>
        <taxon>Heunggongvirae</taxon>
        <taxon>Uroviricota</taxon>
        <taxon>Caudoviricetes</taxon>
        <taxon>Straboviridae</taxon>
        <taxon>Tevenvirinae</taxon>
        <taxon>Tequatrovirus</taxon>
        <taxon>Tequatrovirus T2</taxon>
    </lineage>
</organism>
<organismHost>
    <name type="scientific">Escherichia coli</name>
    <dbReference type="NCBI Taxonomy" id="562"/>
</organismHost>
<evidence type="ECO:0000250" key="1">
    <source>
        <dbReference type="UniProtKB" id="P15556"/>
    </source>
</evidence>